<feature type="chain" id="PRO_0000127582" description="Large ribosomal subunit protein eL15">
    <location>
        <begin position="1"/>
        <end position="194"/>
    </location>
</feature>
<feature type="region of interest" description="Disordered" evidence="2">
    <location>
        <begin position="165"/>
        <end position="194"/>
    </location>
</feature>
<feature type="compositionally biased region" description="Basic residues" evidence="2">
    <location>
        <begin position="167"/>
        <end position="176"/>
    </location>
</feature>
<feature type="compositionally biased region" description="Basic and acidic residues" evidence="2">
    <location>
        <begin position="177"/>
        <end position="194"/>
    </location>
</feature>
<accession>Q8U2F9</accession>
<evidence type="ECO:0000255" key="1">
    <source>
        <dbReference type="HAMAP-Rule" id="MF_00256"/>
    </source>
</evidence>
<evidence type="ECO:0000256" key="2">
    <source>
        <dbReference type="SAM" id="MobiDB-lite"/>
    </source>
</evidence>
<evidence type="ECO:0000269" key="3">
    <source>
    </source>
</evidence>
<evidence type="ECO:0007744" key="4">
    <source>
        <dbReference type="PDB" id="4V6U"/>
    </source>
</evidence>
<name>RL15E_PYRFU</name>
<comment type="subunit">
    <text evidence="3">Part of the 50S ribosomal subunit.</text>
</comment>
<comment type="similarity">
    <text evidence="1">Belongs to the eukaryotic ribosomal protein eL15 family.</text>
</comment>
<gene>
    <name evidence="1" type="primary">rpl15e</name>
    <name type="ordered locus">PF0876</name>
</gene>
<organism>
    <name type="scientific">Pyrococcus furiosus (strain ATCC 43587 / DSM 3638 / JCM 8422 / Vc1)</name>
    <dbReference type="NCBI Taxonomy" id="186497"/>
    <lineage>
        <taxon>Archaea</taxon>
        <taxon>Methanobacteriati</taxon>
        <taxon>Methanobacteriota</taxon>
        <taxon>Thermococci</taxon>
        <taxon>Thermococcales</taxon>
        <taxon>Thermococcaceae</taxon>
        <taxon>Pyrococcus</taxon>
    </lineage>
</organism>
<dbReference type="EMBL" id="AE009950">
    <property type="protein sequence ID" value="AAL81000.1"/>
    <property type="molecule type" value="Genomic_DNA"/>
</dbReference>
<dbReference type="RefSeq" id="WP_011012009.1">
    <property type="nucleotide sequence ID" value="NZ_CP023154.1"/>
</dbReference>
<dbReference type="PDB" id="4V4N">
    <property type="method" value="EM"/>
    <property type="resolution" value="9.00 A"/>
    <property type="chains" value="M=1-194"/>
</dbReference>
<dbReference type="PDB" id="4V6U">
    <property type="method" value="EM"/>
    <property type="resolution" value="6.60 A"/>
    <property type="chains" value="BM=1-194"/>
</dbReference>
<dbReference type="PDBsum" id="4V4N"/>
<dbReference type="PDBsum" id="4V6U"/>
<dbReference type="SMR" id="Q8U2F9"/>
<dbReference type="STRING" id="186497.PF0876"/>
<dbReference type="PaxDb" id="186497-PF0876"/>
<dbReference type="KEGG" id="pfu:PF0876"/>
<dbReference type="PATRIC" id="fig|186497.12.peg.927"/>
<dbReference type="eggNOG" id="arCOG04209">
    <property type="taxonomic scope" value="Archaea"/>
</dbReference>
<dbReference type="HOGENOM" id="CLU_080796_1_0_2"/>
<dbReference type="OrthoDB" id="8183at2157"/>
<dbReference type="PhylomeDB" id="Q8U2F9"/>
<dbReference type="Proteomes" id="UP000001013">
    <property type="component" value="Chromosome"/>
</dbReference>
<dbReference type="GO" id="GO:0022625">
    <property type="term" value="C:cytosolic large ribosomal subunit"/>
    <property type="evidence" value="ECO:0007669"/>
    <property type="project" value="TreeGrafter"/>
</dbReference>
<dbReference type="GO" id="GO:0003723">
    <property type="term" value="F:RNA binding"/>
    <property type="evidence" value="ECO:0007669"/>
    <property type="project" value="TreeGrafter"/>
</dbReference>
<dbReference type="GO" id="GO:0003735">
    <property type="term" value="F:structural constituent of ribosome"/>
    <property type="evidence" value="ECO:0007669"/>
    <property type="project" value="InterPro"/>
</dbReference>
<dbReference type="GO" id="GO:0002181">
    <property type="term" value="P:cytoplasmic translation"/>
    <property type="evidence" value="ECO:0007669"/>
    <property type="project" value="TreeGrafter"/>
</dbReference>
<dbReference type="FunFam" id="3.40.1120.10:FF:000002">
    <property type="entry name" value="50S ribosomal protein L15e"/>
    <property type="match status" value="1"/>
</dbReference>
<dbReference type="Gene3D" id="3.40.1120.10">
    <property type="entry name" value="Ribosomal protein l15e"/>
    <property type="match status" value="1"/>
</dbReference>
<dbReference type="HAMAP" id="MF_00256">
    <property type="entry name" value="Ribosomal_eL15"/>
    <property type="match status" value="1"/>
</dbReference>
<dbReference type="InterPro" id="IPR024794">
    <property type="entry name" value="Rbsml_eL15_core_dom_sf"/>
</dbReference>
<dbReference type="InterPro" id="IPR000439">
    <property type="entry name" value="Ribosomal_eL15"/>
</dbReference>
<dbReference type="InterPro" id="IPR020926">
    <property type="entry name" value="Ribosomal_eL15_arc"/>
</dbReference>
<dbReference type="InterPro" id="IPR020925">
    <property type="entry name" value="Ribosomal_eL15_CS"/>
</dbReference>
<dbReference type="InterPro" id="IPR012678">
    <property type="entry name" value="Ribosomal_uL23/eL15/eS24_sf"/>
</dbReference>
<dbReference type="NCBIfam" id="NF003269">
    <property type="entry name" value="PRK04243.1"/>
    <property type="match status" value="1"/>
</dbReference>
<dbReference type="PANTHER" id="PTHR11847:SF4">
    <property type="entry name" value="LARGE RIBOSOMAL SUBUNIT PROTEIN EL15"/>
    <property type="match status" value="1"/>
</dbReference>
<dbReference type="PANTHER" id="PTHR11847">
    <property type="entry name" value="RIBOSOMAL PROTEIN L15"/>
    <property type="match status" value="1"/>
</dbReference>
<dbReference type="Pfam" id="PF00827">
    <property type="entry name" value="Ribosomal_L15e"/>
    <property type="match status" value="1"/>
</dbReference>
<dbReference type="SMART" id="SM01384">
    <property type="entry name" value="Ribosomal_L15e"/>
    <property type="match status" value="1"/>
</dbReference>
<dbReference type="SUPFAM" id="SSF54189">
    <property type="entry name" value="Ribosomal proteins S24e, L23 and L15e"/>
    <property type="match status" value="1"/>
</dbReference>
<dbReference type="PROSITE" id="PS01194">
    <property type="entry name" value="RIBOSOMAL_L15E"/>
    <property type="match status" value="1"/>
</dbReference>
<reference key="1">
    <citation type="journal article" date="1999" name="Genetics">
        <title>Divergence of the hyperthermophilic archaea Pyrococcus furiosus and P. horikoshii inferred from complete genomic sequences.</title>
        <authorList>
            <person name="Maeder D.L."/>
            <person name="Weiss R.B."/>
            <person name="Dunn D.M."/>
            <person name="Cherry J.L."/>
            <person name="Gonzalez J.M."/>
            <person name="DiRuggiero J."/>
            <person name="Robb F.T."/>
        </authorList>
    </citation>
    <scope>NUCLEOTIDE SEQUENCE [LARGE SCALE GENOMIC DNA]</scope>
    <source>
        <strain>ATCC 43587 / DSM 3638 / JCM 8422 / Vc1</strain>
    </source>
</reference>
<reference evidence="4" key="2">
    <citation type="journal article" date="2013" name="Nucleic Acids Res.">
        <title>Promiscuous behaviour of archaeal ribosomal proteins: implications for eukaryotic ribosome evolution.</title>
        <authorList>
            <person name="Armache J.P."/>
            <person name="Anger A.M."/>
            <person name="Marquez V."/>
            <person name="Franckenberg S."/>
            <person name="Frohlich T."/>
            <person name="Villa E."/>
            <person name="Berninghausen O."/>
            <person name="Thomm M."/>
            <person name="Arnold G.J."/>
            <person name="Beckmann R."/>
            <person name="Wilson D.N."/>
        </authorList>
    </citation>
    <scope>STRUCTURE BY ELECTRON MICROSCOPY (6.6 ANGSTROMS) OF 70S RIBOSOME</scope>
    <scope>SUBUNIT</scope>
</reference>
<protein>
    <recommendedName>
        <fullName evidence="1">Large ribosomal subunit protein eL15</fullName>
    </recommendedName>
    <alternativeName>
        <fullName>50S ribosomal protein L15e</fullName>
    </alternativeName>
</protein>
<proteinExistence type="evidence at protein level"/>
<keyword id="KW-0002">3D-structure</keyword>
<keyword id="KW-1185">Reference proteome</keyword>
<keyword id="KW-0687">Ribonucleoprotein</keyword>
<keyword id="KW-0689">Ribosomal protein</keyword>
<sequence>MGMYKYIREAWKSPKKSYVGELLKQRMIKWRREPVVVRIERPTRLDRARALGYQAKQGYVIVRVRVRKGGRKRPRWKGGRKPSKMGQVKYSPKKSLQWIAEEKAARKFPNLEVLNSYWVGEDGMYKWFEVIMVDPHHPVIKSDPKIAWIALKHHKGRVFRGLTSAGKKGRGLRNKGKGAEKVRPSIRANEGKGK</sequence>